<proteinExistence type="inferred from homology"/>
<organism>
    <name type="scientific">Francisella philomiragia subsp. philomiragia (strain ATCC 25017 / CCUG 19701 / FSC 153 / O#319-036)</name>
    <dbReference type="NCBI Taxonomy" id="484022"/>
    <lineage>
        <taxon>Bacteria</taxon>
        <taxon>Pseudomonadati</taxon>
        <taxon>Pseudomonadota</taxon>
        <taxon>Gammaproteobacteria</taxon>
        <taxon>Thiotrichales</taxon>
        <taxon>Francisellaceae</taxon>
        <taxon>Francisella</taxon>
    </lineage>
</organism>
<keyword id="KW-1003">Cell membrane</keyword>
<keyword id="KW-0210">Decarboxylase</keyword>
<keyword id="KW-0444">Lipid biosynthesis</keyword>
<keyword id="KW-0443">Lipid metabolism</keyword>
<keyword id="KW-0456">Lyase</keyword>
<keyword id="KW-0472">Membrane</keyword>
<keyword id="KW-0594">Phospholipid biosynthesis</keyword>
<keyword id="KW-1208">Phospholipid metabolism</keyword>
<keyword id="KW-0670">Pyruvate</keyword>
<keyword id="KW-0865">Zymogen</keyword>
<evidence type="ECO:0000255" key="1">
    <source>
        <dbReference type="HAMAP-Rule" id="MF_00662"/>
    </source>
</evidence>
<comment type="function">
    <text evidence="1">Catalyzes the formation of phosphatidylethanolamine (PtdEtn) from phosphatidylserine (PtdSer).</text>
</comment>
<comment type="catalytic activity">
    <reaction evidence="1">
        <text>a 1,2-diacyl-sn-glycero-3-phospho-L-serine + H(+) = a 1,2-diacyl-sn-glycero-3-phosphoethanolamine + CO2</text>
        <dbReference type="Rhea" id="RHEA:20828"/>
        <dbReference type="ChEBI" id="CHEBI:15378"/>
        <dbReference type="ChEBI" id="CHEBI:16526"/>
        <dbReference type="ChEBI" id="CHEBI:57262"/>
        <dbReference type="ChEBI" id="CHEBI:64612"/>
        <dbReference type="EC" id="4.1.1.65"/>
    </reaction>
</comment>
<comment type="cofactor">
    <cofactor evidence="1">
        <name>pyruvate</name>
        <dbReference type="ChEBI" id="CHEBI:15361"/>
    </cofactor>
    <text evidence="1">Binds 1 pyruvoyl group covalently per subunit.</text>
</comment>
<comment type="pathway">
    <text evidence="1">Phospholipid metabolism; phosphatidylethanolamine biosynthesis; phosphatidylethanolamine from CDP-diacylglycerol: step 2/2.</text>
</comment>
<comment type="subunit">
    <text evidence="1">Heterodimer of a large membrane-associated beta subunit and a small pyruvoyl-containing alpha subunit.</text>
</comment>
<comment type="subcellular location">
    <subcellularLocation>
        <location evidence="1">Cell membrane</location>
        <topology evidence="1">Peripheral membrane protein</topology>
    </subcellularLocation>
</comment>
<comment type="PTM">
    <text evidence="1">Is synthesized initially as an inactive proenzyme. Formation of the active enzyme involves a self-maturation process in which the active site pyruvoyl group is generated from an internal serine residue via an autocatalytic post-translational modification. Two non-identical subunits are generated from the proenzyme in this reaction, and the pyruvate is formed at the N-terminus of the alpha chain, which is derived from the carboxyl end of the proenzyme. The autoendoproteolytic cleavage occurs by a canonical serine protease mechanism, in which the side chain hydroxyl group of the serine supplies its oxygen atom to form the C-terminus of the beta chain, while the remainder of the serine residue undergoes an oxidative deamination to produce ammonia and the pyruvoyl prosthetic group on the alpha chain. During this reaction, the Ser that is part of the protease active site of the proenzyme becomes the pyruvoyl prosthetic group, which constitutes an essential element of the active site of the mature decarboxylase.</text>
</comment>
<comment type="similarity">
    <text evidence="1">Belongs to the phosphatidylserine decarboxylase family. PSD-B subfamily. Prokaryotic type I sub-subfamily.</text>
</comment>
<feature type="chain" id="PRO_1000082892" description="Phosphatidylserine decarboxylase beta chain" evidence="1">
    <location>
        <begin position="1"/>
        <end position="247"/>
    </location>
</feature>
<feature type="chain" id="PRO_1000082893" description="Phosphatidylserine decarboxylase alpha chain" evidence="1">
    <location>
        <begin position="248"/>
        <end position="281"/>
    </location>
</feature>
<feature type="active site" description="Charge relay system; for autoendoproteolytic cleavage activity" evidence="1">
    <location>
        <position position="90"/>
    </location>
</feature>
<feature type="active site" description="Charge relay system; for autoendoproteolytic cleavage activity" evidence="1">
    <location>
        <position position="143"/>
    </location>
</feature>
<feature type="active site" description="Charge relay system; for autoendoproteolytic cleavage activity" evidence="1">
    <location>
        <position position="248"/>
    </location>
</feature>
<feature type="active site" description="Schiff-base intermediate with substrate; via pyruvic acid; for decarboxylase activity" evidence="1">
    <location>
        <position position="248"/>
    </location>
</feature>
<feature type="site" description="Cleavage (non-hydrolytic); by autocatalysis" evidence="1">
    <location>
        <begin position="247"/>
        <end position="248"/>
    </location>
</feature>
<feature type="modified residue" description="Pyruvic acid (Ser); by autocatalysis" evidence="1">
    <location>
        <position position="248"/>
    </location>
</feature>
<gene>
    <name evidence="1" type="primary">psd</name>
    <name type="ordered locus">Fphi_0370</name>
</gene>
<accession>B0TZM7</accession>
<name>PSD_FRAP2</name>
<reference key="1">
    <citation type="submission" date="2007-12" db="EMBL/GenBank/DDBJ databases">
        <title>Complete sequence of chromosome of Francisella philomiragia subsp. philomiragia ATCC 25017.</title>
        <authorList>
            <consortium name="US DOE Joint Genome Institute"/>
            <person name="Copeland A."/>
            <person name="Lucas S."/>
            <person name="Lapidus A."/>
            <person name="Barry K."/>
            <person name="Detter J.C."/>
            <person name="Glavina del Rio T."/>
            <person name="Hammon N."/>
            <person name="Israni S."/>
            <person name="Dalin E."/>
            <person name="Tice H."/>
            <person name="Pitluck S."/>
            <person name="Chain P."/>
            <person name="Malfatti S."/>
            <person name="Shin M."/>
            <person name="Vergez L."/>
            <person name="Schmutz J."/>
            <person name="Larimer F."/>
            <person name="Land M."/>
            <person name="Hauser L."/>
            <person name="Richardson P."/>
        </authorList>
    </citation>
    <scope>NUCLEOTIDE SEQUENCE [LARGE SCALE GENOMIC DNA]</scope>
    <source>
        <strain>ATCC 25017 / CCUG 19701 / FSC 153 / O#319-036</strain>
    </source>
</reference>
<sequence length="281" mass="31792">MKDKIFIFLQYIIPHSLTSRLVSKLAESKNKHLKNYLINLAIKKFKIDISEAKETDINKYTSFNNFFIRELKDGLRPISSDKKIISSPADGVLSEFGDITNGSLVQAKGKTFTLKALIADSSTTDFTKFATIYLSPKDYHRVHMPIDGKLTKMVYIPGKLFSVNKVTAQNVDDLFAKNERLVCYFKTEIGEVAVIFVGALLVAGIETVWHGKVAPNYYKDIQIWNYDNDSFNIEFKKGDTLGWFNFGSTVIILMPNNNISFKYNQSNANISVNQDLALIAE</sequence>
<protein>
    <recommendedName>
        <fullName evidence="1">Phosphatidylserine decarboxylase proenzyme</fullName>
        <ecNumber evidence="1">4.1.1.65</ecNumber>
    </recommendedName>
    <component>
        <recommendedName>
            <fullName evidence="1">Phosphatidylserine decarboxylase alpha chain</fullName>
        </recommendedName>
    </component>
    <component>
        <recommendedName>
            <fullName evidence="1">Phosphatidylserine decarboxylase beta chain</fullName>
        </recommendedName>
    </component>
</protein>
<dbReference type="EC" id="4.1.1.65" evidence="1"/>
<dbReference type="EMBL" id="CP000937">
    <property type="protein sequence ID" value="ABZ86586.1"/>
    <property type="molecule type" value="Genomic_DNA"/>
</dbReference>
<dbReference type="SMR" id="B0TZM7"/>
<dbReference type="KEGG" id="fph:Fphi_0370"/>
<dbReference type="eggNOG" id="COG0688">
    <property type="taxonomic scope" value="Bacteria"/>
</dbReference>
<dbReference type="HOGENOM" id="CLU_029061_4_1_6"/>
<dbReference type="UniPathway" id="UPA00558">
    <property type="reaction ID" value="UER00616"/>
</dbReference>
<dbReference type="GO" id="GO:0005886">
    <property type="term" value="C:plasma membrane"/>
    <property type="evidence" value="ECO:0007669"/>
    <property type="project" value="UniProtKB-SubCell"/>
</dbReference>
<dbReference type="GO" id="GO:0004609">
    <property type="term" value="F:phosphatidylserine decarboxylase activity"/>
    <property type="evidence" value="ECO:0007669"/>
    <property type="project" value="UniProtKB-UniRule"/>
</dbReference>
<dbReference type="GO" id="GO:0006646">
    <property type="term" value="P:phosphatidylethanolamine biosynthetic process"/>
    <property type="evidence" value="ECO:0007669"/>
    <property type="project" value="UniProtKB-UniRule"/>
</dbReference>
<dbReference type="HAMAP" id="MF_00662">
    <property type="entry name" value="PS_decarb_PSD_B_type1"/>
    <property type="match status" value="1"/>
</dbReference>
<dbReference type="InterPro" id="IPR003817">
    <property type="entry name" value="PS_Dcarbxylase"/>
</dbReference>
<dbReference type="InterPro" id="IPR033177">
    <property type="entry name" value="PSD-B"/>
</dbReference>
<dbReference type="InterPro" id="IPR033178">
    <property type="entry name" value="PSD_type1_pro"/>
</dbReference>
<dbReference type="NCBIfam" id="TIGR00163">
    <property type="entry name" value="PS_decarb"/>
    <property type="match status" value="1"/>
</dbReference>
<dbReference type="PANTHER" id="PTHR10067">
    <property type="entry name" value="PHOSPHATIDYLSERINE DECARBOXYLASE"/>
    <property type="match status" value="1"/>
</dbReference>
<dbReference type="PANTHER" id="PTHR10067:SF6">
    <property type="entry name" value="PHOSPHATIDYLSERINE DECARBOXYLASE PROENZYME, MITOCHONDRIAL"/>
    <property type="match status" value="1"/>
</dbReference>
<dbReference type="Pfam" id="PF02666">
    <property type="entry name" value="PS_Dcarbxylase"/>
    <property type="match status" value="1"/>
</dbReference>